<sequence length="430" mass="45238">MNDLLPAAAAPAGARALPLRHADPEIWRAVDAERQRQMHSIELIASENFVSQAVLDAQGSVMTNKYAEGYPGRRYYGGCRHVDVAERAAIERARRLFGCEYANVQPHSGSQANQAVYLALLAPGDRILGLDLKAGGHLTHGARVNLSGKWFEALSYGVDPVSHRIDMDEVERTARRERPRLIIAGGSAYARVPDFARFRAIADATGALFVADMAHYAGLVAGGAFPSPVPFAHVTTTTTHKTLRGPRGGMILTDDADIARRIDAAVFPGLQGGPLMHVIAAKAVALGEALQPGFRAYARAVIDNARALCARLAEGGLSIVSGGTDCHLGVVDLRPWGLAGNAAERALEEAGITVNKNAVPGDAASPAVTSGIRVGSAACTSRGMGPAEFRQIGDLVLAVLGGLRDGGQAGGRDAVPARAAELSRRFPLPY</sequence>
<name>GLYA1_BORPA</name>
<accession>Q7W1I6</accession>
<dbReference type="EC" id="2.1.2.1" evidence="1"/>
<dbReference type="EMBL" id="BX640425">
    <property type="protein sequence ID" value="CAE40110.1"/>
    <property type="molecule type" value="Genomic_DNA"/>
</dbReference>
<dbReference type="RefSeq" id="WP_010927638.1">
    <property type="nucleotide sequence ID" value="NC_002928.3"/>
</dbReference>
<dbReference type="SMR" id="Q7W1I6"/>
<dbReference type="GeneID" id="93202452"/>
<dbReference type="KEGG" id="bpa:BPP0701"/>
<dbReference type="HOGENOM" id="CLU_022477_2_1_4"/>
<dbReference type="UniPathway" id="UPA00193"/>
<dbReference type="UniPathway" id="UPA00288">
    <property type="reaction ID" value="UER01023"/>
</dbReference>
<dbReference type="Proteomes" id="UP000001421">
    <property type="component" value="Chromosome"/>
</dbReference>
<dbReference type="GO" id="GO:0005829">
    <property type="term" value="C:cytosol"/>
    <property type="evidence" value="ECO:0007669"/>
    <property type="project" value="TreeGrafter"/>
</dbReference>
<dbReference type="GO" id="GO:0004372">
    <property type="term" value="F:glycine hydroxymethyltransferase activity"/>
    <property type="evidence" value="ECO:0007669"/>
    <property type="project" value="UniProtKB-UniRule"/>
</dbReference>
<dbReference type="GO" id="GO:0030170">
    <property type="term" value="F:pyridoxal phosphate binding"/>
    <property type="evidence" value="ECO:0007669"/>
    <property type="project" value="UniProtKB-UniRule"/>
</dbReference>
<dbReference type="GO" id="GO:0019264">
    <property type="term" value="P:glycine biosynthetic process from serine"/>
    <property type="evidence" value="ECO:0007669"/>
    <property type="project" value="UniProtKB-UniRule"/>
</dbReference>
<dbReference type="GO" id="GO:0035999">
    <property type="term" value="P:tetrahydrofolate interconversion"/>
    <property type="evidence" value="ECO:0007669"/>
    <property type="project" value="UniProtKB-UniRule"/>
</dbReference>
<dbReference type="CDD" id="cd00378">
    <property type="entry name" value="SHMT"/>
    <property type="match status" value="1"/>
</dbReference>
<dbReference type="FunFam" id="3.40.640.10:FF:000001">
    <property type="entry name" value="Serine hydroxymethyltransferase"/>
    <property type="match status" value="1"/>
</dbReference>
<dbReference type="Gene3D" id="3.90.1150.10">
    <property type="entry name" value="Aspartate Aminotransferase, domain 1"/>
    <property type="match status" value="1"/>
</dbReference>
<dbReference type="Gene3D" id="3.40.640.10">
    <property type="entry name" value="Type I PLP-dependent aspartate aminotransferase-like (Major domain)"/>
    <property type="match status" value="1"/>
</dbReference>
<dbReference type="HAMAP" id="MF_00051">
    <property type="entry name" value="SHMT"/>
    <property type="match status" value="1"/>
</dbReference>
<dbReference type="InterPro" id="IPR015424">
    <property type="entry name" value="PyrdxlP-dep_Trfase"/>
</dbReference>
<dbReference type="InterPro" id="IPR015421">
    <property type="entry name" value="PyrdxlP-dep_Trfase_major"/>
</dbReference>
<dbReference type="InterPro" id="IPR015422">
    <property type="entry name" value="PyrdxlP-dep_Trfase_small"/>
</dbReference>
<dbReference type="InterPro" id="IPR001085">
    <property type="entry name" value="Ser_HO-MeTrfase"/>
</dbReference>
<dbReference type="InterPro" id="IPR049943">
    <property type="entry name" value="Ser_HO-MeTrfase-like"/>
</dbReference>
<dbReference type="InterPro" id="IPR019798">
    <property type="entry name" value="Ser_HO-MeTrfase_PLP_BS"/>
</dbReference>
<dbReference type="InterPro" id="IPR039429">
    <property type="entry name" value="SHMT-like_dom"/>
</dbReference>
<dbReference type="NCBIfam" id="NF000586">
    <property type="entry name" value="PRK00011.1"/>
    <property type="match status" value="1"/>
</dbReference>
<dbReference type="PANTHER" id="PTHR11680">
    <property type="entry name" value="SERINE HYDROXYMETHYLTRANSFERASE"/>
    <property type="match status" value="1"/>
</dbReference>
<dbReference type="PANTHER" id="PTHR11680:SF35">
    <property type="entry name" value="SERINE HYDROXYMETHYLTRANSFERASE 1"/>
    <property type="match status" value="1"/>
</dbReference>
<dbReference type="Pfam" id="PF00464">
    <property type="entry name" value="SHMT"/>
    <property type="match status" value="1"/>
</dbReference>
<dbReference type="PIRSF" id="PIRSF000412">
    <property type="entry name" value="SHMT"/>
    <property type="match status" value="1"/>
</dbReference>
<dbReference type="SUPFAM" id="SSF53383">
    <property type="entry name" value="PLP-dependent transferases"/>
    <property type="match status" value="1"/>
</dbReference>
<dbReference type="PROSITE" id="PS00096">
    <property type="entry name" value="SHMT"/>
    <property type="match status" value="1"/>
</dbReference>
<evidence type="ECO:0000255" key="1">
    <source>
        <dbReference type="HAMAP-Rule" id="MF_00051"/>
    </source>
</evidence>
<keyword id="KW-0028">Amino-acid biosynthesis</keyword>
<keyword id="KW-0963">Cytoplasm</keyword>
<keyword id="KW-0554">One-carbon metabolism</keyword>
<keyword id="KW-0663">Pyridoxal phosphate</keyword>
<keyword id="KW-0808">Transferase</keyword>
<organism>
    <name type="scientific">Bordetella parapertussis (strain 12822 / ATCC BAA-587 / NCTC 13253)</name>
    <dbReference type="NCBI Taxonomy" id="257311"/>
    <lineage>
        <taxon>Bacteria</taxon>
        <taxon>Pseudomonadati</taxon>
        <taxon>Pseudomonadota</taxon>
        <taxon>Betaproteobacteria</taxon>
        <taxon>Burkholderiales</taxon>
        <taxon>Alcaligenaceae</taxon>
        <taxon>Bordetella</taxon>
    </lineage>
</organism>
<protein>
    <recommendedName>
        <fullName evidence="1">Serine hydroxymethyltransferase 1</fullName>
        <shortName evidence="1">SHMT 1</shortName>
        <shortName evidence="1">Serine methylase 1</shortName>
        <ecNumber evidence="1">2.1.2.1</ecNumber>
    </recommendedName>
</protein>
<comment type="function">
    <text evidence="1">Catalyzes the reversible interconversion of serine and glycine with tetrahydrofolate (THF) serving as the one-carbon carrier. This reaction serves as the major source of one-carbon groups required for the biosynthesis of purines, thymidylate, methionine, and other important biomolecules. Also exhibits THF-independent aldolase activity toward beta-hydroxyamino acids, producing glycine and aldehydes, via a retro-aldol mechanism.</text>
</comment>
<comment type="catalytic activity">
    <reaction evidence="1">
        <text>(6R)-5,10-methylene-5,6,7,8-tetrahydrofolate + glycine + H2O = (6S)-5,6,7,8-tetrahydrofolate + L-serine</text>
        <dbReference type="Rhea" id="RHEA:15481"/>
        <dbReference type="ChEBI" id="CHEBI:15377"/>
        <dbReference type="ChEBI" id="CHEBI:15636"/>
        <dbReference type="ChEBI" id="CHEBI:33384"/>
        <dbReference type="ChEBI" id="CHEBI:57305"/>
        <dbReference type="ChEBI" id="CHEBI:57453"/>
        <dbReference type="EC" id="2.1.2.1"/>
    </reaction>
</comment>
<comment type="cofactor">
    <cofactor evidence="1">
        <name>pyridoxal 5'-phosphate</name>
        <dbReference type="ChEBI" id="CHEBI:597326"/>
    </cofactor>
</comment>
<comment type="pathway">
    <text evidence="1">One-carbon metabolism; tetrahydrofolate interconversion.</text>
</comment>
<comment type="pathway">
    <text evidence="1">Amino-acid biosynthesis; glycine biosynthesis; glycine from L-serine: step 1/1.</text>
</comment>
<comment type="subunit">
    <text evidence="1">Homodimer.</text>
</comment>
<comment type="subcellular location">
    <subcellularLocation>
        <location evidence="1">Cytoplasm</location>
    </subcellularLocation>
</comment>
<comment type="similarity">
    <text evidence="1">Belongs to the SHMT family.</text>
</comment>
<gene>
    <name evidence="1" type="primary">glyA1</name>
    <name type="ordered locus">BPP0701</name>
</gene>
<reference key="1">
    <citation type="journal article" date="2003" name="Nat. Genet.">
        <title>Comparative analysis of the genome sequences of Bordetella pertussis, Bordetella parapertussis and Bordetella bronchiseptica.</title>
        <authorList>
            <person name="Parkhill J."/>
            <person name="Sebaihia M."/>
            <person name="Preston A."/>
            <person name="Murphy L.D."/>
            <person name="Thomson N.R."/>
            <person name="Harris D.E."/>
            <person name="Holden M.T.G."/>
            <person name="Churcher C.M."/>
            <person name="Bentley S.D."/>
            <person name="Mungall K.L."/>
            <person name="Cerdeno-Tarraga A.-M."/>
            <person name="Temple L."/>
            <person name="James K.D."/>
            <person name="Harris B."/>
            <person name="Quail M.A."/>
            <person name="Achtman M."/>
            <person name="Atkin R."/>
            <person name="Baker S."/>
            <person name="Basham D."/>
            <person name="Bason N."/>
            <person name="Cherevach I."/>
            <person name="Chillingworth T."/>
            <person name="Collins M."/>
            <person name="Cronin A."/>
            <person name="Davis P."/>
            <person name="Doggett J."/>
            <person name="Feltwell T."/>
            <person name="Goble A."/>
            <person name="Hamlin N."/>
            <person name="Hauser H."/>
            <person name="Holroyd S."/>
            <person name="Jagels K."/>
            <person name="Leather S."/>
            <person name="Moule S."/>
            <person name="Norberczak H."/>
            <person name="O'Neil S."/>
            <person name="Ormond D."/>
            <person name="Price C."/>
            <person name="Rabbinowitsch E."/>
            <person name="Rutter S."/>
            <person name="Sanders M."/>
            <person name="Saunders D."/>
            <person name="Seeger K."/>
            <person name="Sharp S."/>
            <person name="Simmonds M."/>
            <person name="Skelton J."/>
            <person name="Squares R."/>
            <person name="Squares S."/>
            <person name="Stevens K."/>
            <person name="Unwin L."/>
            <person name="Whitehead S."/>
            <person name="Barrell B.G."/>
            <person name="Maskell D.J."/>
        </authorList>
    </citation>
    <scope>NUCLEOTIDE SEQUENCE [LARGE SCALE GENOMIC DNA]</scope>
    <source>
        <strain>12822 / ATCC BAA-587 / NCTC 13253</strain>
    </source>
</reference>
<proteinExistence type="inferred from homology"/>
<feature type="chain" id="PRO_0000113541" description="Serine hydroxymethyltransferase 1">
    <location>
        <begin position="1"/>
        <end position="430"/>
    </location>
</feature>
<feature type="binding site" evidence="1">
    <location>
        <position position="132"/>
    </location>
    <ligand>
        <name>(6S)-5,6,7,8-tetrahydrofolate</name>
        <dbReference type="ChEBI" id="CHEBI:57453"/>
    </ligand>
</feature>
<feature type="binding site" evidence="1">
    <location>
        <begin position="136"/>
        <end position="138"/>
    </location>
    <ligand>
        <name>(6S)-5,6,7,8-tetrahydrofolate</name>
        <dbReference type="ChEBI" id="CHEBI:57453"/>
    </ligand>
</feature>
<feature type="site" description="Plays an important role in substrate specificity" evidence="1">
    <location>
        <position position="240"/>
    </location>
</feature>
<feature type="modified residue" description="N6-(pyridoxal phosphate)lysine" evidence="1">
    <location>
        <position position="241"/>
    </location>
</feature>